<evidence type="ECO:0000255" key="1">
    <source>
        <dbReference type="HAMAP-Rule" id="MF_03122"/>
    </source>
</evidence>
<evidence type="ECO:0000305" key="2"/>
<protein>
    <recommendedName>
        <fullName evidence="1">Small ribosomal subunit protein eS1</fullName>
    </recommendedName>
    <alternativeName>
        <fullName>40S ribosomal protein S1</fullName>
    </alternativeName>
    <alternativeName>
        <fullName>S3aE</fullName>
    </alternativeName>
</protein>
<keyword id="KW-0002">3D-structure</keyword>
<keyword id="KW-0007">Acetylation</keyword>
<keyword id="KW-0963">Cytoplasm</keyword>
<keyword id="KW-1185">Reference proteome</keyword>
<keyword id="KW-0687">Ribonucleoprotein</keyword>
<keyword id="KW-0689">Ribosomal protein</keyword>
<organism>
    <name type="scientific">Candida albicans (strain SC5314 / ATCC MYA-2876)</name>
    <name type="common">Yeast</name>
    <dbReference type="NCBI Taxonomy" id="237561"/>
    <lineage>
        <taxon>Eukaryota</taxon>
        <taxon>Fungi</taxon>
        <taxon>Dikarya</taxon>
        <taxon>Ascomycota</taxon>
        <taxon>Saccharomycotina</taxon>
        <taxon>Pichiomycetes</taxon>
        <taxon>Debaryomycetaceae</taxon>
        <taxon>Candida/Lodderomyces clade</taxon>
        <taxon>Candida</taxon>
    </lineage>
</organism>
<comment type="subunit">
    <text evidence="1">Component of the small ribosomal subunit. Mature ribosomes consist of a small (40S) and a large (60S) subunit. The 40S subunit contains about 33 different proteins and 1 molecule of RNA (18S). The 60S subunit contains about 49 different proteins and 3 molecules of RNA (25S, 5.8S and 5S).</text>
</comment>
<comment type="subcellular location">
    <subcellularLocation>
        <location evidence="1">Cytoplasm</location>
    </subcellularLocation>
</comment>
<comment type="similarity">
    <text evidence="1">Belongs to the eukaryotic ribosomal protein eS1 family.</text>
</comment>
<dbReference type="EMBL" id="X82017">
    <property type="protein sequence ID" value="CAA57542.1"/>
    <property type="molecule type" value="Genomic_DNA"/>
</dbReference>
<dbReference type="EMBL" id="CP017623">
    <property type="protein sequence ID" value="AOW25990.1"/>
    <property type="molecule type" value="Genomic_DNA"/>
</dbReference>
<dbReference type="PIR" id="S49366">
    <property type="entry name" value="S49366"/>
</dbReference>
<dbReference type="RefSeq" id="XP_721500.1">
    <property type="nucleotide sequence ID" value="XM_716407.2"/>
</dbReference>
<dbReference type="PDB" id="7PZY">
    <property type="method" value="EM"/>
    <property type="resolution" value="2.32 A"/>
    <property type="chains" value="C=1-256"/>
</dbReference>
<dbReference type="PDB" id="7Q08">
    <property type="method" value="EM"/>
    <property type="resolution" value="2.56 A"/>
    <property type="chains" value="C=1-256"/>
</dbReference>
<dbReference type="PDB" id="7Q0F">
    <property type="method" value="EM"/>
    <property type="resolution" value="2.64 A"/>
    <property type="chains" value="C=1-256"/>
</dbReference>
<dbReference type="PDB" id="7Q0P">
    <property type="method" value="EM"/>
    <property type="resolution" value="2.77 A"/>
    <property type="chains" value="C=1-256"/>
</dbReference>
<dbReference type="PDB" id="7Q0R">
    <property type="method" value="EM"/>
    <property type="resolution" value="2.67 A"/>
    <property type="chains" value="C=1-256"/>
</dbReference>
<dbReference type="PDB" id="8C3A">
    <property type="method" value="X-ray"/>
    <property type="resolution" value="3.00 A"/>
    <property type="chains" value="CO/D=1-256"/>
</dbReference>
<dbReference type="PDB" id="8OGJ">
    <property type="method" value="EM"/>
    <property type="resolution" value="3.10 A"/>
    <property type="chains" value="C=1-256"/>
</dbReference>
<dbReference type="PDB" id="8OH6">
    <property type="method" value="X-ray"/>
    <property type="resolution" value="3.35 A"/>
    <property type="chains" value="CO/D=1-256"/>
</dbReference>
<dbReference type="PDB" id="8OI5">
    <property type="method" value="X-ray"/>
    <property type="resolution" value="2.90 A"/>
    <property type="chains" value="CO/D=1-256"/>
</dbReference>
<dbReference type="PDB" id="8OJ3">
    <property type="method" value="X-ray"/>
    <property type="resolution" value="3.50 A"/>
    <property type="chains" value="CO/D=1-256"/>
</dbReference>
<dbReference type="PDBsum" id="7PZY"/>
<dbReference type="PDBsum" id="7Q08"/>
<dbReference type="PDBsum" id="7Q0F"/>
<dbReference type="PDBsum" id="7Q0P"/>
<dbReference type="PDBsum" id="7Q0R"/>
<dbReference type="PDBsum" id="8C3A"/>
<dbReference type="PDBsum" id="8OGJ"/>
<dbReference type="PDBsum" id="8OH6"/>
<dbReference type="PDBsum" id="8OI5"/>
<dbReference type="PDBsum" id="8OJ3"/>
<dbReference type="EMDB" id="EMD-13737"/>
<dbReference type="EMDB" id="EMD-13741"/>
<dbReference type="EMDB" id="EMD-13744"/>
<dbReference type="EMDB" id="EMD-13749"/>
<dbReference type="EMDB" id="EMD-13750"/>
<dbReference type="SMR" id="P40910"/>
<dbReference type="BioGRID" id="1220018">
    <property type="interactions" value="1"/>
</dbReference>
<dbReference type="FunCoup" id="P40910">
    <property type="interactions" value="1439"/>
</dbReference>
<dbReference type="STRING" id="237561.P40910"/>
<dbReference type="EnsemblFungi" id="C1_03090W_A-T">
    <property type="protein sequence ID" value="C1_03090W_A-T-p1"/>
    <property type="gene ID" value="C1_03090W_A"/>
</dbReference>
<dbReference type="GeneID" id="3636924"/>
<dbReference type="KEGG" id="cal:CAALFM_C103090WA"/>
<dbReference type="CGD" id="CAL0000192592">
    <property type="gene designation" value="RPS1"/>
</dbReference>
<dbReference type="VEuPathDB" id="FungiDB:C1_03090W_A"/>
<dbReference type="eggNOG" id="KOG1628">
    <property type="taxonomic scope" value="Eukaryota"/>
</dbReference>
<dbReference type="HOGENOM" id="CLU_062507_0_0_1"/>
<dbReference type="InParanoid" id="P40910"/>
<dbReference type="OMA" id="TRFKGHE"/>
<dbReference type="OrthoDB" id="9834376at2759"/>
<dbReference type="PRO" id="PR:P40910"/>
<dbReference type="Proteomes" id="UP000000559">
    <property type="component" value="Chromosome 1"/>
</dbReference>
<dbReference type="GO" id="GO:0005829">
    <property type="term" value="C:cytosol"/>
    <property type="evidence" value="ECO:0000318"/>
    <property type="project" value="GO_Central"/>
</dbReference>
<dbReference type="GO" id="GO:0022627">
    <property type="term" value="C:cytosolic small ribosomal subunit"/>
    <property type="evidence" value="ECO:0000250"/>
    <property type="project" value="CGD"/>
</dbReference>
<dbReference type="GO" id="GO:0030446">
    <property type="term" value="C:hyphal cell wall"/>
    <property type="evidence" value="ECO:0000314"/>
    <property type="project" value="CGD"/>
</dbReference>
<dbReference type="GO" id="GO:0003735">
    <property type="term" value="F:structural constituent of ribosome"/>
    <property type="evidence" value="ECO:0000250"/>
    <property type="project" value="CGD"/>
</dbReference>
<dbReference type="GO" id="GO:0006412">
    <property type="term" value="P:translation"/>
    <property type="evidence" value="ECO:0000250"/>
    <property type="project" value="CGD"/>
</dbReference>
<dbReference type="HAMAP" id="MF_03122">
    <property type="entry name" value="Ribosomal_eS1_euk"/>
    <property type="match status" value="1"/>
</dbReference>
<dbReference type="InterPro" id="IPR001593">
    <property type="entry name" value="Ribosomal_eS1"/>
</dbReference>
<dbReference type="InterPro" id="IPR018281">
    <property type="entry name" value="Ribosomal_eS1_CS"/>
</dbReference>
<dbReference type="InterPro" id="IPR027500">
    <property type="entry name" value="Ribosomal_eS1_euk"/>
</dbReference>
<dbReference type="PANTHER" id="PTHR11830">
    <property type="entry name" value="40S RIBOSOMAL PROTEIN S3A"/>
    <property type="match status" value="1"/>
</dbReference>
<dbReference type="Pfam" id="PF01015">
    <property type="entry name" value="Ribosomal_S3Ae"/>
    <property type="match status" value="1"/>
</dbReference>
<dbReference type="SMART" id="SM01397">
    <property type="entry name" value="Ribosomal_S3Ae"/>
    <property type="match status" value="1"/>
</dbReference>
<dbReference type="PROSITE" id="PS01191">
    <property type="entry name" value="RIBOSOMAL_S3AE"/>
    <property type="match status" value="1"/>
</dbReference>
<feature type="initiator methionine" description="Removed" evidence="1">
    <location>
        <position position="1"/>
    </location>
</feature>
<feature type="chain" id="PRO_0000153538" description="Small ribosomal subunit protein eS1">
    <location>
        <begin position="2"/>
        <end position="256"/>
    </location>
</feature>
<feature type="modified residue" description="N-acetylalanine; partial" evidence="1">
    <location>
        <position position="2"/>
    </location>
</feature>
<feature type="sequence conflict" description="In Ref. 1; CAA57542." evidence="2" ref="1">
    <original>K</original>
    <variation>E</variation>
    <location>
        <position position="152"/>
    </location>
</feature>
<feature type="sequence conflict" description="In Ref. 1; CAA57542." evidence="2" ref="1">
    <original>V</original>
    <variation>A</variation>
    <location>
        <position position="164"/>
    </location>
</feature>
<feature type="sequence conflict" description="In Ref. 1; CAA57542." evidence="2" ref="1">
    <original>MQ</original>
    <variation>IE</variation>
    <location>
        <begin position="172"/>
        <end position="173"/>
    </location>
</feature>
<feature type="sequence conflict" description="In Ref. 1; CAA57542." evidence="2" ref="1">
    <original>L</original>
    <variation>W</variation>
    <location>
        <position position="225"/>
    </location>
</feature>
<accession>P40910</accession>
<accession>A0A1D8PCX2</accession>
<accession>Q5AI50</accession>
<name>RS3A_CANAL</name>
<proteinExistence type="evidence at protein level"/>
<gene>
    <name evidence="1" type="primary">RPS1</name>
    <name type="synonym">PLC1</name>
    <name type="synonym">RP10</name>
    <name type="synonym">RPS10</name>
    <name type="ordered locus">CAALFM_C103090WA</name>
    <name type="ORF">CaO19.10520</name>
    <name type="ORF">CaO19.3002</name>
</gene>
<sequence>MAVGKNKRLSKGKKGLKKKVVDPFTRKDWFDIKAPTTFENRNVGKTLINRSTGLKNAADGLKGRVFEVCLADLQGSEDHSYRKIKLRVDEVQGKNLLTNFHGLDFTSDKLRSLVRKWQSLVEANVTVKTSDDYVLRVFAIAFTKRQPNQIKKTTYAQSSKLREVRKKMIEIMQREVSNCTLAQLTSKLIPEVIGREIEKSTQTIFPLQNVHIRKVKLLKQPKFDLGSLLALHGEGSTEEKGKKVSSGFKDVVLESV</sequence>
<reference key="1">
    <citation type="journal article" date="1995" name="J. Bacteriol.">
        <title>Structure and regulation of a Candida albicans RP10 gene which encodes an immunogenic protein homologous to Saccharomyces cerevisiae ribosomal protein 10.</title>
        <authorList>
            <person name="Swoboda R.K."/>
            <person name="Broadbent I.D."/>
            <person name="Bertram G."/>
            <person name="Budge S."/>
            <person name="Gooday G.W."/>
            <person name="Gow N.A.R."/>
            <person name="Brown A.J.P."/>
        </authorList>
    </citation>
    <scope>NUCLEOTIDE SEQUENCE [GENOMIC DNA]</scope>
    <source>
        <strain>ATCC 10261 / CBS 2718 / NBRC 1061</strain>
    </source>
</reference>
<reference key="2">
    <citation type="journal article" date="2004" name="Proc. Natl. Acad. Sci. U.S.A.">
        <title>The diploid genome sequence of Candida albicans.</title>
        <authorList>
            <person name="Jones T."/>
            <person name="Federspiel N.A."/>
            <person name="Chibana H."/>
            <person name="Dungan J."/>
            <person name="Kalman S."/>
            <person name="Magee B.B."/>
            <person name="Newport G."/>
            <person name="Thorstenson Y.R."/>
            <person name="Agabian N."/>
            <person name="Magee P.T."/>
            <person name="Davis R.W."/>
            <person name="Scherer S."/>
        </authorList>
    </citation>
    <scope>NUCLEOTIDE SEQUENCE [LARGE SCALE GENOMIC DNA]</scope>
    <source>
        <strain>SC5314 / ATCC MYA-2876</strain>
    </source>
</reference>
<reference key="3">
    <citation type="journal article" date="2007" name="Genome Biol.">
        <title>Assembly of the Candida albicans genome into sixteen supercontigs aligned on the eight chromosomes.</title>
        <authorList>
            <person name="van het Hoog M."/>
            <person name="Rast T.J."/>
            <person name="Martchenko M."/>
            <person name="Grindle S."/>
            <person name="Dignard D."/>
            <person name="Hogues H."/>
            <person name="Cuomo C."/>
            <person name="Berriman M."/>
            <person name="Scherer S."/>
            <person name="Magee B.B."/>
            <person name="Whiteway M."/>
            <person name="Chibana H."/>
            <person name="Nantel A."/>
            <person name="Magee P.T."/>
        </authorList>
    </citation>
    <scope>GENOME REANNOTATION</scope>
    <source>
        <strain>SC5314 / ATCC MYA-2876</strain>
    </source>
</reference>
<reference key="4">
    <citation type="journal article" date="2013" name="Genome Biol.">
        <title>Assembly of a phased diploid Candida albicans genome facilitates allele-specific measurements and provides a simple model for repeat and indel structure.</title>
        <authorList>
            <person name="Muzzey D."/>
            <person name="Schwartz K."/>
            <person name="Weissman J.S."/>
            <person name="Sherlock G."/>
        </authorList>
    </citation>
    <scope>NUCLEOTIDE SEQUENCE [LARGE SCALE GENOMIC DNA]</scope>
    <scope>GENOME REANNOTATION</scope>
    <source>
        <strain>SC5314 / ATCC MYA-2876</strain>
    </source>
</reference>